<evidence type="ECO:0000305" key="1"/>
<dbReference type="EMBL" id="AK006539">
    <property type="protein sequence ID" value="BAB24642.1"/>
    <property type="molecule type" value="mRNA"/>
</dbReference>
<dbReference type="CCDS" id="CCDS27633.1"/>
<dbReference type="RefSeq" id="NP_001297505.1">
    <property type="nucleotide sequence ID" value="NM_001310576.1"/>
</dbReference>
<dbReference type="RefSeq" id="NP_001297508.1">
    <property type="nucleotide sequence ID" value="NM_001310579.1"/>
</dbReference>
<dbReference type="RefSeq" id="NP_001297510.1">
    <property type="nucleotide sequence ID" value="NM_001310581.1"/>
</dbReference>
<dbReference type="RefSeq" id="NP_613047.1">
    <property type="nucleotide sequence ID" value="NM_138581.2"/>
</dbReference>
<dbReference type="SMR" id="Q9D9S1"/>
<dbReference type="FunCoup" id="Q9D9S1">
    <property type="interactions" value="3"/>
</dbReference>
<dbReference type="STRING" id="10090.ENSMUSP00000140347"/>
<dbReference type="PhosphoSitePlus" id="Q9D9S1"/>
<dbReference type="PaxDb" id="10090-ENSMUSP00000129244"/>
<dbReference type="Antibodypedia" id="258">
    <property type="antibodies" value="46 antibodies from 15 providers"/>
</dbReference>
<dbReference type="Ensembl" id="ENSMUST00000169604.8">
    <property type="protein sequence ID" value="ENSMUSP00000129244.2"/>
    <property type="gene ID" value="ENSMUSG00000033029.13"/>
</dbReference>
<dbReference type="Ensembl" id="ENSMUST00000190959.7">
    <property type="protein sequence ID" value="ENSMUSP00000140347.2"/>
    <property type="gene ID" value="ENSMUSG00000033029.13"/>
</dbReference>
<dbReference type="GeneID" id="27660"/>
<dbReference type="KEGG" id="mmu:27660"/>
<dbReference type="UCSC" id="uc007wss.1">
    <property type="organism name" value="mouse"/>
</dbReference>
<dbReference type="AGR" id="MGI:1920774"/>
<dbReference type="MGI" id="MGI:1920774">
    <property type="gene designation" value="1700088E04Rik"/>
</dbReference>
<dbReference type="VEuPathDB" id="HostDB:ENSMUSG00000033029"/>
<dbReference type="eggNOG" id="ENOG502RYD0">
    <property type="taxonomic scope" value="Eukaryota"/>
</dbReference>
<dbReference type="GeneTree" id="ENSGT00390000010231"/>
<dbReference type="InParanoid" id="Q9D9S1"/>
<dbReference type="OMA" id="MMAYGKD"/>
<dbReference type="OrthoDB" id="189770at2759"/>
<dbReference type="PhylomeDB" id="Q9D9S1"/>
<dbReference type="TreeFam" id="TF323579"/>
<dbReference type="BioGRID-ORCS" id="27660">
    <property type="hits" value="1 hit in 78 CRISPR screens"/>
</dbReference>
<dbReference type="PRO" id="PR:Q9D9S1"/>
<dbReference type="Proteomes" id="UP000000589">
    <property type="component" value="Chromosome 15"/>
</dbReference>
<dbReference type="RNAct" id="Q9D9S1">
    <property type="molecule type" value="protein"/>
</dbReference>
<dbReference type="Bgee" id="ENSMUSG00000033029">
    <property type="expression patterns" value="Expressed in seminiferous tubule of testis and 160 other cell types or tissues"/>
</dbReference>
<dbReference type="ExpressionAtlas" id="Q9D9S1">
    <property type="expression patterns" value="baseline and differential"/>
</dbReference>
<dbReference type="InterPro" id="IPR007914">
    <property type="entry name" value="UPF0193"/>
</dbReference>
<dbReference type="PANTHER" id="PTHR28348">
    <property type="entry name" value="UPF0193 PROTEIN EVG1"/>
    <property type="match status" value="1"/>
</dbReference>
<dbReference type="PANTHER" id="PTHR28348:SF1">
    <property type="entry name" value="UPF0193 PROTEIN EVG1"/>
    <property type="match status" value="1"/>
</dbReference>
<dbReference type="Pfam" id="PF05250">
    <property type="entry name" value="UPF0193"/>
    <property type="match status" value="1"/>
</dbReference>
<protein>
    <recommendedName>
        <fullName>UPF0193 protein EVG1 homolog</fullName>
    </recommendedName>
</protein>
<organism>
    <name type="scientific">Mus musculus</name>
    <name type="common">Mouse</name>
    <dbReference type="NCBI Taxonomy" id="10090"/>
    <lineage>
        <taxon>Eukaryota</taxon>
        <taxon>Metazoa</taxon>
        <taxon>Chordata</taxon>
        <taxon>Craniata</taxon>
        <taxon>Vertebrata</taxon>
        <taxon>Euteleostomi</taxon>
        <taxon>Mammalia</taxon>
        <taxon>Eutheria</taxon>
        <taxon>Euarchontoglires</taxon>
        <taxon>Glires</taxon>
        <taxon>Rodentia</taxon>
        <taxon>Myomorpha</taxon>
        <taxon>Muroidea</taxon>
        <taxon>Muridae</taxon>
        <taxon>Murinae</taxon>
        <taxon>Mus</taxon>
        <taxon>Mus</taxon>
    </lineage>
</organism>
<keyword id="KW-1185">Reference proteome</keyword>
<accession>Q9D9S1</accession>
<comment type="similarity">
    <text evidence="1">Belongs to the UPF0193 (EVG1) family.</text>
</comment>
<proteinExistence type="evidence at transcript level"/>
<name>EVG1_MOUSE</name>
<reference key="1">
    <citation type="journal article" date="2005" name="Science">
        <title>The transcriptional landscape of the mammalian genome.</title>
        <authorList>
            <person name="Carninci P."/>
            <person name="Kasukawa T."/>
            <person name="Katayama S."/>
            <person name="Gough J."/>
            <person name="Frith M.C."/>
            <person name="Maeda N."/>
            <person name="Oyama R."/>
            <person name="Ravasi T."/>
            <person name="Lenhard B."/>
            <person name="Wells C."/>
            <person name="Kodzius R."/>
            <person name="Shimokawa K."/>
            <person name="Bajic V.B."/>
            <person name="Brenner S.E."/>
            <person name="Batalov S."/>
            <person name="Forrest A.R."/>
            <person name="Zavolan M."/>
            <person name="Davis M.J."/>
            <person name="Wilming L.G."/>
            <person name="Aidinis V."/>
            <person name="Allen J.E."/>
            <person name="Ambesi-Impiombato A."/>
            <person name="Apweiler R."/>
            <person name="Aturaliya R.N."/>
            <person name="Bailey T.L."/>
            <person name="Bansal M."/>
            <person name="Baxter L."/>
            <person name="Beisel K.W."/>
            <person name="Bersano T."/>
            <person name="Bono H."/>
            <person name="Chalk A.M."/>
            <person name="Chiu K.P."/>
            <person name="Choudhary V."/>
            <person name="Christoffels A."/>
            <person name="Clutterbuck D.R."/>
            <person name="Crowe M.L."/>
            <person name="Dalla E."/>
            <person name="Dalrymple B.P."/>
            <person name="de Bono B."/>
            <person name="Della Gatta G."/>
            <person name="di Bernardo D."/>
            <person name="Down T."/>
            <person name="Engstrom P."/>
            <person name="Fagiolini M."/>
            <person name="Faulkner G."/>
            <person name="Fletcher C.F."/>
            <person name="Fukushima T."/>
            <person name="Furuno M."/>
            <person name="Futaki S."/>
            <person name="Gariboldi M."/>
            <person name="Georgii-Hemming P."/>
            <person name="Gingeras T.R."/>
            <person name="Gojobori T."/>
            <person name="Green R.E."/>
            <person name="Gustincich S."/>
            <person name="Harbers M."/>
            <person name="Hayashi Y."/>
            <person name="Hensch T.K."/>
            <person name="Hirokawa N."/>
            <person name="Hill D."/>
            <person name="Huminiecki L."/>
            <person name="Iacono M."/>
            <person name="Ikeo K."/>
            <person name="Iwama A."/>
            <person name="Ishikawa T."/>
            <person name="Jakt M."/>
            <person name="Kanapin A."/>
            <person name="Katoh M."/>
            <person name="Kawasawa Y."/>
            <person name="Kelso J."/>
            <person name="Kitamura H."/>
            <person name="Kitano H."/>
            <person name="Kollias G."/>
            <person name="Krishnan S.P."/>
            <person name="Kruger A."/>
            <person name="Kummerfeld S.K."/>
            <person name="Kurochkin I.V."/>
            <person name="Lareau L.F."/>
            <person name="Lazarevic D."/>
            <person name="Lipovich L."/>
            <person name="Liu J."/>
            <person name="Liuni S."/>
            <person name="McWilliam S."/>
            <person name="Madan Babu M."/>
            <person name="Madera M."/>
            <person name="Marchionni L."/>
            <person name="Matsuda H."/>
            <person name="Matsuzawa S."/>
            <person name="Miki H."/>
            <person name="Mignone F."/>
            <person name="Miyake S."/>
            <person name="Morris K."/>
            <person name="Mottagui-Tabar S."/>
            <person name="Mulder N."/>
            <person name="Nakano N."/>
            <person name="Nakauchi H."/>
            <person name="Ng P."/>
            <person name="Nilsson R."/>
            <person name="Nishiguchi S."/>
            <person name="Nishikawa S."/>
            <person name="Nori F."/>
            <person name="Ohara O."/>
            <person name="Okazaki Y."/>
            <person name="Orlando V."/>
            <person name="Pang K.C."/>
            <person name="Pavan W.J."/>
            <person name="Pavesi G."/>
            <person name="Pesole G."/>
            <person name="Petrovsky N."/>
            <person name="Piazza S."/>
            <person name="Reed J."/>
            <person name="Reid J.F."/>
            <person name="Ring B.Z."/>
            <person name="Ringwald M."/>
            <person name="Rost B."/>
            <person name="Ruan Y."/>
            <person name="Salzberg S.L."/>
            <person name="Sandelin A."/>
            <person name="Schneider C."/>
            <person name="Schoenbach C."/>
            <person name="Sekiguchi K."/>
            <person name="Semple C.A."/>
            <person name="Seno S."/>
            <person name="Sessa L."/>
            <person name="Sheng Y."/>
            <person name="Shibata Y."/>
            <person name="Shimada H."/>
            <person name="Shimada K."/>
            <person name="Silva D."/>
            <person name="Sinclair B."/>
            <person name="Sperling S."/>
            <person name="Stupka E."/>
            <person name="Sugiura K."/>
            <person name="Sultana R."/>
            <person name="Takenaka Y."/>
            <person name="Taki K."/>
            <person name="Tammoja K."/>
            <person name="Tan S.L."/>
            <person name="Tang S."/>
            <person name="Taylor M.S."/>
            <person name="Tegner J."/>
            <person name="Teichmann S.A."/>
            <person name="Ueda H.R."/>
            <person name="van Nimwegen E."/>
            <person name="Verardo R."/>
            <person name="Wei C.L."/>
            <person name="Yagi K."/>
            <person name="Yamanishi H."/>
            <person name="Zabarovsky E."/>
            <person name="Zhu S."/>
            <person name="Zimmer A."/>
            <person name="Hide W."/>
            <person name="Bult C."/>
            <person name="Grimmond S.M."/>
            <person name="Teasdale R.D."/>
            <person name="Liu E.T."/>
            <person name="Brusic V."/>
            <person name="Quackenbush J."/>
            <person name="Wahlestedt C."/>
            <person name="Mattick J.S."/>
            <person name="Hume D.A."/>
            <person name="Kai C."/>
            <person name="Sasaki D."/>
            <person name="Tomaru Y."/>
            <person name="Fukuda S."/>
            <person name="Kanamori-Katayama M."/>
            <person name="Suzuki M."/>
            <person name="Aoki J."/>
            <person name="Arakawa T."/>
            <person name="Iida J."/>
            <person name="Imamura K."/>
            <person name="Itoh M."/>
            <person name="Kato T."/>
            <person name="Kawaji H."/>
            <person name="Kawagashira N."/>
            <person name="Kawashima T."/>
            <person name="Kojima M."/>
            <person name="Kondo S."/>
            <person name="Konno H."/>
            <person name="Nakano K."/>
            <person name="Ninomiya N."/>
            <person name="Nishio T."/>
            <person name="Okada M."/>
            <person name="Plessy C."/>
            <person name="Shibata K."/>
            <person name="Shiraki T."/>
            <person name="Suzuki S."/>
            <person name="Tagami M."/>
            <person name="Waki K."/>
            <person name="Watahiki A."/>
            <person name="Okamura-Oho Y."/>
            <person name="Suzuki H."/>
            <person name="Kawai J."/>
            <person name="Hayashizaki Y."/>
        </authorList>
    </citation>
    <scope>NUCLEOTIDE SEQUENCE [LARGE SCALE MRNA]</scope>
    <source>
        <strain>C57BL/6J</strain>
        <tissue>Testis</tissue>
    </source>
</reference>
<sequence length="216" mass="24737">MASQERVDSVTKGTGFRRCRKQAGYTPGTCELLRVMMKESKLTNFQQRHIMDTMKRGAPLPLQCNPTSSLRGSPSKKAASAIYLPPILATHSHLRPASLCQANGAYSREQFKPQATRDLEKEKRRLQNIFATGKDKEERKKVPHVRQEDPAPELDRFDELVKEIQDRKEFLAAMEALGQGRQYRSIILAEISQKLREMEDIDRRRSKELRKALATT</sequence>
<feature type="chain" id="PRO_0000221090" description="UPF0193 protein EVG1 homolog">
    <location>
        <begin position="1"/>
        <end position="216"/>
    </location>
</feature>